<organism>
    <name type="scientific">Pseudomonas entomophila (strain L48)</name>
    <dbReference type="NCBI Taxonomy" id="384676"/>
    <lineage>
        <taxon>Bacteria</taxon>
        <taxon>Pseudomonadati</taxon>
        <taxon>Pseudomonadota</taxon>
        <taxon>Gammaproteobacteria</taxon>
        <taxon>Pseudomonadales</taxon>
        <taxon>Pseudomonadaceae</taxon>
        <taxon>Pseudomonas</taxon>
    </lineage>
</organism>
<protein>
    <recommendedName>
        <fullName evidence="1">Ketol-acid reductoisomerase (NADP(+))</fullName>
        <shortName evidence="1">KARI</shortName>
        <ecNumber evidence="1">1.1.1.86</ecNumber>
    </recommendedName>
    <alternativeName>
        <fullName evidence="1">Acetohydroxy-acid isomeroreductase</fullName>
        <shortName evidence="1">AHIR</shortName>
    </alternativeName>
    <alternativeName>
        <fullName evidence="1">Alpha-keto-beta-hydroxylacyl reductoisomerase</fullName>
    </alternativeName>
    <alternativeName>
        <fullName evidence="1">Ketol-acid reductoisomerase type 1</fullName>
    </alternativeName>
    <alternativeName>
        <fullName evidence="1">Ketol-acid reductoisomerase type I</fullName>
    </alternativeName>
</protein>
<sequence length="338" mass="36470">MKVFYDKDCDLSIIQGKKVAIIGYGSQGHAQACNLKDSGVDVTIGLRKGSATVAKAEAHGLKVTDVATAVAAADLVMILTPDEFQGQLYKQEIEPNIKKGATLAFSHGFAIHYNQVVPRADLDVIMIAPKAPGHTVRSEFVKGGGIPDLIAIYQDASGNAKNVALSYASGVGGGRTGIIETTFKDETETDLFGEQAVLCGGTVELVKAGFETLVEAGYAPEMAYFECLHELKLIVDLMYEGGIANMNYSISNNAEYGEYVTGPEVINEESRKAMRNALKRIQDGEYAKMFISEGATNYPSMTAKRRNNAAHGIEIIGEQLRSMMPWISANKIVDKTKN</sequence>
<proteinExistence type="inferred from homology"/>
<reference key="1">
    <citation type="journal article" date="2006" name="Nat. Biotechnol.">
        <title>Complete genome sequence of the entomopathogenic and metabolically versatile soil bacterium Pseudomonas entomophila.</title>
        <authorList>
            <person name="Vodovar N."/>
            <person name="Vallenet D."/>
            <person name="Cruveiller S."/>
            <person name="Rouy Z."/>
            <person name="Barbe V."/>
            <person name="Acosta C."/>
            <person name="Cattolico L."/>
            <person name="Jubin C."/>
            <person name="Lajus A."/>
            <person name="Segurens B."/>
            <person name="Vacherie B."/>
            <person name="Wincker P."/>
            <person name="Weissenbach J."/>
            <person name="Lemaitre B."/>
            <person name="Medigue C."/>
            <person name="Boccard F."/>
        </authorList>
    </citation>
    <scope>NUCLEOTIDE SEQUENCE [LARGE SCALE GENOMIC DNA]</scope>
    <source>
        <strain>L48</strain>
    </source>
</reference>
<name>ILVC_PSEE4</name>
<feature type="chain" id="PRO_1000050560" description="Ketol-acid reductoisomerase (NADP(+))">
    <location>
        <begin position="1"/>
        <end position="338"/>
    </location>
</feature>
<feature type="domain" description="KARI N-terminal Rossmann" evidence="2">
    <location>
        <begin position="1"/>
        <end position="181"/>
    </location>
</feature>
<feature type="domain" description="KARI C-terminal knotted" evidence="3">
    <location>
        <begin position="182"/>
        <end position="327"/>
    </location>
</feature>
<feature type="active site" evidence="1">
    <location>
        <position position="107"/>
    </location>
</feature>
<feature type="binding site" evidence="1">
    <location>
        <begin position="24"/>
        <end position="27"/>
    </location>
    <ligand>
        <name>NADP(+)</name>
        <dbReference type="ChEBI" id="CHEBI:58349"/>
    </ligand>
</feature>
<feature type="binding site" evidence="1">
    <location>
        <position position="47"/>
    </location>
    <ligand>
        <name>NADP(+)</name>
        <dbReference type="ChEBI" id="CHEBI:58349"/>
    </ligand>
</feature>
<feature type="binding site" evidence="1">
    <location>
        <position position="50"/>
    </location>
    <ligand>
        <name>NADP(+)</name>
        <dbReference type="ChEBI" id="CHEBI:58349"/>
    </ligand>
</feature>
<feature type="binding site" evidence="1">
    <location>
        <position position="52"/>
    </location>
    <ligand>
        <name>NADP(+)</name>
        <dbReference type="ChEBI" id="CHEBI:58349"/>
    </ligand>
</feature>
<feature type="binding site" evidence="1">
    <location>
        <begin position="82"/>
        <end position="85"/>
    </location>
    <ligand>
        <name>NADP(+)</name>
        <dbReference type="ChEBI" id="CHEBI:58349"/>
    </ligand>
</feature>
<feature type="binding site" evidence="1">
    <location>
        <position position="133"/>
    </location>
    <ligand>
        <name>NADP(+)</name>
        <dbReference type="ChEBI" id="CHEBI:58349"/>
    </ligand>
</feature>
<feature type="binding site" evidence="1">
    <location>
        <position position="190"/>
    </location>
    <ligand>
        <name>Mg(2+)</name>
        <dbReference type="ChEBI" id="CHEBI:18420"/>
        <label>1</label>
    </ligand>
</feature>
<feature type="binding site" evidence="1">
    <location>
        <position position="190"/>
    </location>
    <ligand>
        <name>Mg(2+)</name>
        <dbReference type="ChEBI" id="CHEBI:18420"/>
        <label>2</label>
    </ligand>
</feature>
<feature type="binding site" evidence="1">
    <location>
        <position position="194"/>
    </location>
    <ligand>
        <name>Mg(2+)</name>
        <dbReference type="ChEBI" id="CHEBI:18420"/>
        <label>1</label>
    </ligand>
</feature>
<feature type="binding site" evidence="1">
    <location>
        <position position="226"/>
    </location>
    <ligand>
        <name>Mg(2+)</name>
        <dbReference type="ChEBI" id="CHEBI:18420"/>
        <label>2</label>
    </ligand>
</feature>
<feature type="binding site" evidence="1">
    <location>
        <position position="230"/>
    </location>
    <ligand>
        <name>Mg(2+)</name>
        <dbReference type="ChEBI" id="CHEBI:18420"/>
        <label>2</label>
    </ligand>
</feature>
<feature type="binding site" evidence="1">
    <location>
        <position position="251"/>
    </location>
    <ligand>
        <name>substrate</name>
    </ligand>
</feature>
<keyword id="KW-0028">Amino-acid biosynthesis</keyword>
<keyword id="KW-0100">Branched-chain amino acid biosynthesis</keyword>
<keyword id="KW-0460">Magnesium</keyword>
<keyword id="KW-0479">Metal-binding</keyword>
<keyword id="KW-0521">NADP</keyword>
<keyword id="KW-0560">Oxidoreductase</keyword>
<accession>Q1I4R5</accession>
<evidence type="ECO:0000255" key="1">
    <source>
        <dbReference type="HAMAP-Rule" id="MF_00435"/>
    </source>
</evidence>
<evidence type="ECO:0000255" key="2">
    <source>
        <dbReference type="PROSITE-ProRule" id="PRU01197"/>
    </source>
</evidence>
<evidence type="ECO:0000255" key="3">
    <source>
        <dbReference type="PROSITE-ProRule" id="PRU01198"/>
    </source>
</evidence>
<dbReference type="EC" id="1.1.1.86" evidence="1"/>
<dbReference type="EMBL" id="CT573326">
    <property type="protein sequence ID" value="CAK17371.1"/>
    <property type="molecule type" value="Genomic_DNA"/>
</dbReference>
<dbReference type="RefSeq" id="WP_011535735.1">
    <property type="nucleotide sequence ID" value="NC_008027.1"/>
</dbReference>
<dbReference type="SMR" id="Q1I4R5"/>
<dbReference type="STRING" id="384676.PSEEN4709"/>
<dbReference type="GeneID" id="32807677"/>
<dbReference type="KEGG" id="pen:PSEEN4709"/>
<dbReference type="eggNOG" id="COG0059">
    <property type="taxonomic scope" value="Bacteria"/>
</dbReference>
<dbReference type="HOGENOM" id="CLU_033821_0_1_6"/>
<dbReference type="OrthoDB" id="9804088at2"/>
<dbReference type="UniPathway" id="UPA00047">
    <property type="reaction ID" value="UER00056"/>
</dbReference>
<dbReference type="UniPathway" id="UPA00049">
    <property type="reaction ID" value="UER00060"/>
</dbReference>
<dbReference type="Proteomes" id="UP000000658">
    <property type="component" value="Chromosome"/>
</dbReference>
<dbReference type="GO" id="GO:0005829">
    <property type="term" value="C:cytosol"/>
    <property type="evidence" value="ECO:0007669"/>
    <property type="project" value="TreeGrafter"/>
</dbReference>
<dbReference type="GO" id="GO:0004455">
    <property type="term" value="F:ketol-acid reductoisomerase activity"/>
    <property type="evidence" value="ECO:0007669"/>
    <property type="project" value="UniProtKB-UniRule"/>
</dbReference>
<dbReference type="GO" id="GO:0000287">
    <property type="term" value="F:magnesium ion binding"/>
    <property type="evidence" value="ECO:0007669"/>
    <property type="project" value="UniProtKB-UniRule"/>
</dbReference>
<dbReference type="GO" id="GO:0050661">
    <property type="term" value="F:NADP binding"/>
    <property type="evidence" value="ECO:0007669"/>
    <property type="project" value="InterPro"/>
</dbReference>
<dbReference type="GO" id="GO:0009097">
    <property type="term" value="P:isoleucine biosynthetic process"/>
    <property type="evidence" value="ECO:0007669"/>
    <property type="project" value="UniProtKB-UniRule"/>
</dbReference>
<dbReference type="GO" id="GO:0009099">
    <property type="term" value="P:L-valine biosynthetic process"/>
    <property type="evidence" value="ECO:0007669"/>
    <property type="project" value="UniProtKB-UniRule"/>
</dbReference>
<dbReference type="FunFam" id="3.40.50.720:FF:000023">
    <property type="entry name" value="Ketol-acid reductoisomerase (NADP(+))"/>
    <property type="match status" value="1"/>
</dbReference>
<dbReference type="Gene3D" id="6.10.240.10">
    <property type="match status" value="1"/>
</dbReference>
<dbReference type="Gene3D" id="3.40.50.720">
    <property type="entry name" value="NAD(P)-binding Rossmann-like Domain"/>
    <property type="match status" value="1"/>
</dbReference>
<dbReference type="HAMAP" id="MF_00435">
    <property type="entry name" value="IlvC"/>
    <property type="match status" value="1"/>
</dbReference>
<dbReference type="InterPro" id="IPR008927">
    <property type="entry name" value="6-PGluconate_DH-like_C_sf"/>
</dbReference>
<dbReference type="InterPro" id="IPR013023">
    <property type="entry name" value="KARI"/>
</dbReference>
<dbReference type="InterPro" id="IPR000506">
    <property type="entry name" value="KARI_C"/>
</dbReference>
<dbReference type="InterPro" id="IPR013116">
    <property type="entry name" value="KARI_N"/>
</dbReference>
<dbReference type="InterPro" id="IPR014359">
    <property type="entry name" value="KARI_prok"/>
</dbReference>
<dbReference type="InterPro" id="IPR036291">
    <property type="entry name" value="NAD(P)-bd_dom_sf"/>
</dbReference>
<dbReference type="NCBIfam" id="TIGR00465">
    <property type="entry name" value="ilvC"/>
    <property type="match status" value="1"/>
</dbReference>
<dbReference type="NCBIfam" id="NF004017">
    <property type="entry name" value="PRK05479.1"/>
    <property type="match status" value="1"/>
</dbReference>
<dbReference type="NCBIfam" id="NF009940">
    <property type="entry name" value="PRK13403.1"/>
    <property type="match status" value="1"/>
</dbReference>
<dbReference type="PANTHER" id="PTHR21371">
    <property type="entry name" value="KETOL-ACID REDUCTOISOMERASE, MITOCHONDRIAL"/>
    <property type="match status" value="1"/>
</dbReference>
<dbReference type="PANTHER" id="PTHR21371:SF1">
    <property type="entry name" value="KETOL-ACID REDUCTOISOMERASE, MITOCHONDRIAL"/>
    <property type="match status" value="1"/>
</dbReference>
<dbReference type="Pfam" id="PF01450">
    <property type="entry name" value="KARI_C"/>
    <property type="match status" value="1"/>
</dbReference>
<dbReference type="Pfam" id="PF07991">
    <property type="entry name" value="KARI_N"/>
    <property type="match status" value="1"/>
</dbReference>
<dbReference type="PIRSF" id="PIRSF000116">
    <property type="entry name" value="IlvC_gammaproteo"/>
    <property type="match status" value="1"/>
</dbReference>
<dbReference type="SUPFAM" id="SSF48179">
    <property type="entry name" value="6-phosphogluconate dehydrogenase C-terminal domain-like"/>
    <property type="match status" value="1"/>
</dbReference>
<dbReference type="SUPFAM" id="SSF51735">
    <property type="entry name" value="NAD(P)-binding Rossmann-fold domains"/>
    <property type="match status" value="1"/>
</dbReference>
<dbReference type="PROSITE" id="PS51851">
    <property type="entry name" value="KARI_C"/>
    <property type="match status" value="1"/>
</dbReference>
<dbReference type="PROSITE" id="PS51850">
    <property type="entry name" value="KARI_N"/>
    <property type="match status" value="1"/>
</dbReference>
<gene>
    <name evidence="1" type="primary">ilvC</name>
    <name type="ordered locus">PSEEN4709</name>
</gene>
<comment type="function">
    <text evidence="1">Involved in the biosynthesis of branched-chain amino acids (BCAA). Catalyzes an alkyl-migration followed by a ketol-acid reduction of (S)-2-acetolactate (S2AL) to yield (R)-2,3-dihydroxy-isovalerate. In the isomerase reaction, S2AL is rearranged via a Mg-dependent methyl migration to produce 3-hydroxy-3-methyl-2-ketobutyrate (HMKB). In the reductase reaction, this 2-ketoacid undergoes a metal-dependent reduction by NADPH to yield (R)-2,3-dihydroxy-isovalerate.</text>
</comment>
<comment type="catalytic activity">
    <reaction evidence="1">
        <text>(2R)-2,3-dihydroxy-3-methylbutanoate + NADP(+) = (2S)-2-acetolactate + NADPH + H(+)</text>
        <dbReference type="Rhea" id="RHEA:22068"/>
        <dbReference type="ChEBI" id="CHEBI:15378"/>
        <dbReference type="ChEBI" id="CHEBI:49072"/>
        <dbReference type="ChEBI" id="CHEBI:57783"/>
        <dbReference type="ChEBI" id="CHEBI:58349"/>
        <dbReference type="ChEBI" id="CHEBI:58476"/>
        <dbReference type="EC" id="1.1.1.86"/>
    </reaction>
</comment>
<comment type="catalytic activity">
    <reaction evidence="1">
        <text>(2R,3R)-2,3-dihydroxy-3-methylpentanoate + NADP(+) = (S)-2-ethyl-2-hydroxy-3-oxobutanoate + NADPH + H(+)</text>
        <dbReference type="Rhea" id="RHEA:13493"/>
        <dbReference type="ChEBI" id="CHEBI:15378"/>
        <dbReference type="ChEBI" id="CHEBI:49256"/>
        <dbReference type="ChEBI" id="CHEBI:49258"/>
        <dbReference type="ChEBI" id="CHEBI:57783"/>
        <dbReference type="ChEBI" id="CHEBI:58349"/>
        <dbReference type="EC" id="1.1.1.86"/>
    </reaction>
</comment>
<comment type="cofactor">
    <cofactor evidence="1">
        <name>Mg(2+)</name>
        <dbReference type="ChEBI" id="CHEBI:18420"/>
    </cofactor>
    <text evidence="1">Binds 2 magnesium ions per subunit.</text>
</comment>
<comment type="pathway">
    <text evidence="1">Amino-acid biosynthesis; L-isoleucine biosynthesis; L-isoleucine from 2-oxobutanoate: step 2/4.</text>
</comment>
<comment type="pathway">
    <text evidence="1">Amino-acid biosynthesis; L-valine biosynthesis; L-valine from pyruvate: step 2/4.</text>
</comment>
<comment type="similarity">
    <text evidence="1">Belongs to the ketol-acid reductoisomerase family.</text>
</comment>